<name>HIS8_CLOBL</name>
<keyword id="KW-0028">Amino-acid biosynthesis</keyword>
<keyword id="KW-0032">Aminotransferase</keyword>
<keyword id="KW-0368">Histidine biosynthesis</keyword>
<keyword id="KW-0663">Pyridoxal phosphate</keyword>
<keyword id="KW-0808">Transferase</keyword>
<gene>
    <name evidence="1" type="primary">hisC</name>
    <name type="ordered locus">CLI_1653</name>
</gene>
<feature type="chain" id="PRO_0000319751" description="Histidinol-phosphate aminotransferase">
    <location>
        <begin position="1"/>
        <end position="354"/>
    </location>
</feature>
<feature type="modified residue" description="N6-(pyridoxal phosphate)lysine" evidence="1">
    <location>
        <position position="210"/>
    </location>
</feature>
<proteinExistence type="inferred from homology"/>
<accession>A7GDQ6</accession>
<dbReference type="EC" id="2.6.1.9" evidence="1"/>
<dbReference type="EMBL" id="CP000728">
    <property type="protein sequence ID" value="ABS39882.1"/>
    <property type="molecule type" value="Genomic_DNA"/>
</dbReference>
<dbReference type="RefSeq" id="WP_012099675.1">
    <property type="nucleotide sequence ID" value="NC_009699.1"/>
</dbReference>
<dbReference type="SMR" id="A7GDQ6"/>
<dbReference type="KEGG" id="cbf:CLI_1653"/>
<dbReference type="HOGENOM" id="CLU_017584_3_0_9"/>
<dbReference type="UniPathway" id="UPA00031">
    <property type="reaction ID" value="UER00012"/>
</dbReference>
<dbReference type="Proteomes" id="UP000002410">
    <property type="component" value="Chromosome"/>
</dbReference>
<dbReference type="GO" id="GO:0004400">
    <property type="term" value="F:histidinol-phosphate transaminase activity"/>
    <property type="evidence" value="ECO:0007669"/>
    <property type="project" value="UniProtKB-UniRule"/>
</dbReference>
<dbReference type="GO" id="GO:0030170">
    <property type="term" value="F:pyridoxal phosphate binding"/>
    <property type="evidence" value="ECO:0007669"/>
    <property type="project" value="InterPro"/>
</dbReference>
<dbReference type="GO" id="GO:0000105">
    <property type="term" value="P:L-histidine biosynthetic process"/>
    <property type="evidence" value="ECO:0007669"/>
    <property type="project" value="UniProtKB-UniRule"/>
</dbReference>
<dbReference type="CDD" id="cd00609">
    <property type="entry name" value="AAT_like"/>
    <property type="match status" value="1"/>
</dbReference>
<dbReference type="Gene3D" id="3.90.1150.10">
    <property type="entry name" value="Aspartate Aminotransferase, domain 1"/>
    <property type="match status" value="1"/>
</dbReference>
<dbReference type="Gene3D" id="3.40.640.10">
    <property type="entry name" value="Type I PLP-dependent aspartate aminotransferase-like (Major domain)"/>
    <property type="match status" value="1"/>
</dbReference>
<dbReference type="HAMAP" id="MF_01023">
    <property type="entry name" value="HisC_aminotrans_2"/>
    <property type="match status" value="1"/>
</dbReference>
<dbReference type="InterPro" id="IPR001917">
    <property type="entry name" value="Aminotrans_II_pyridoxalP_BS"/>
</dbReference>
<dbReference type="InterPro" id="IPR004839">
    <property type="entry name" value="Aminotransferase_I/II_large"/>
</dbReference>
<dbReference type="InterPro" id="IPR005861">
    <property type="entry name" value="HisP_aminotrans"/>
</dbReference>
<dbReference type="InterPro" id="IPR050106">
    <property type="entry name" value="HistidinolP_aminotransfase"/>
</dbReference>
<dbReference type="InterPro" id="IPR015424">
    <property type="entry name" value="PyrdxlP-dep_Trfase"/>
</dbReference>
<dbReference type="InterPro" id="IPR015421">
    <property type="entry name" value="PyrdxlP-dep_Trfase_major"/>
</dbReference>
<dbReference type="InterPro" id="IPR015422">
    <property type="entry name" value="PyrdxlP-dep_Trfase_small"/>
</dbReference>
<dbReference type="NCBIfam" id="TIGR01141">
    <property type="entry name" value="hisC"/>
    <property type="match status" value="1"/>
</dbReference>
<dbReference type="PANTHER" id="PTHR43643:SF3">
    <property type="entry name" value="HISTIDINOL-PHOSPHATE AMINOTRANSFERASE"/>
    <property type="match status" value="1"/>
</dbReference>
<dbReference type="PANTHER" id="PTHR43643">
    <property type="entry name" value="HISTIDINOL-PHOSPHATE AMINOTRANSFERASE 2"/>
    <property type="match status" value="1"/>
</dbReference>
<dbReference type="Pfam" id="PF00155">
    <property type="entry name" value="Aminotran_1_2"/>
    <property type="match status" value="1"/>
</dbReference>
<dbReference type="SUPFAM" id="SSF53383">
    <property type="entry name" value="PLP-dependent transferases"/>
    <property type="match status" value="1"/>
</dbReference>
<dbReference type="PROSITE" id="PS00599">
    <property type="entry name" value="AA_TRANSFER_CLASS_2"/>
    <property type="match status" value="1"/>
</dbReference>
<comment type="catalytic activity">
    <reaction evidence="1">
        <text>L-histidinol phosphate + 2-oxoglutarate = 3-(imidazol-4-yl)-2-oxopropyl phosphate + L-glutamate</text>
        <dbReference type="Rhea" id="RHEA:23744"/>
        <dbReference type="ChEBI" id="CHEBI:16810"/>
        <dbReference type="ChEBI" id="CHEBI:29985"/>
        <dbReference type="ChEBI" id="CHEBI:57766"/>
        <dbReference type="ChEBI" id="CHEBI:57980"/>
        <dbReference type="EC" id="2.6.1.9"/>
    </reaction>
</comment>
<comment type="cofactor">
    <cofactor evidence="1">
        <name>pyridoxal 5'-phosphate</name>
        <dbReference type="ChEBI" id="CHEBI:597326"/>
    </cofactor>
</comment>
<comment type="pathway">
    <text evidence="1">Amino-acid biosynthesis; L-histidine biosynthesis; L-histidine from 5-phospho-alpha-D-ribose 1-diphosphate: step 7/9.</text>
</comment>
<comment type="subunit">
    <text evidence="1">Homodimer.</text>
</comment>
<comment type="similarity">
    <text evidence="1">Belongs to the class-II pyridoxal-phosphate-dependent aminotransferase family. Histidinol-phosphate aminotransferase subfamily.</text>
</comment>
<protein>
    <recommendedName>
        <fullName evidence="1">Histidinol-phosphate aminotransferase</fullName>
        <ecNumber evidence="1">2.6.1.9</ecNumber>
    </recommendedName>
    <alternativeName>
        <fullName evidence="1">Imidazole acetol-phosphate transaminase</fullName>
    </alternativeName>
</protein>
<reference key="1">
    <citation type="submission" date="2007-06" db="EMBL/GenBank/DDBJ databases">
        <authorList>
            <person name="Brinkac L.M."/>
            <person name="Daugherty S."/>
            <person name="Dodson R.J."/>
            <person name="Madupu R."/>
            <person name="Brown J.L."/>
            <person name="Bruce D."/>
            <person name="Detter C."/>
            <person name="Munk C."/>
            <person name="Smith L.A."/>
            <person name="Smith T.J."/>
            <person name="White O."/>
            <person name="Brettin T.S."/>
        </authorList>
    </citation>
    <scope>NUCLEOTIDE SEQUENCE [LARGE SCALE GENOMIC DNA]</scope>
    <source>
        <strain>Langeland / NCTC 10281 / Type F</strain>
    </source>
</reference>
<organism>
    <name type="scientific">Clostridium botulinum (strain Langeland / NCTC 10281 / Type F)</name>
    <dbReference type="NCBI Taxonomy" id="441772"/>
    <lineage>
        <taxon>Bacteria</taxon>
        <taxon>Bacillati</taxon>
        <taxon>Bacillota</taxon>
        <taxon>Clostridia</taxon>
        <taxon>Eubacteriales</taxon>
        <taxon>Clostridiaceae</taxon>
        <taxon>Clostridium</taxon>
    </lineage>
</organism>
<sequence>MSKYWSNITKDIEPYVCGEQPKNKKIIKLNTNENPYPPSPKVLQAIKNAAKDDLRLYPDPNCDVLRKTIANYYNLSKEEVFIGNGSDEVLSLSFLTFFNPEETIVFSDISYSFYPVYANLYKLDYKLAKLREDFSIDIEDFKNARGGAVITNPNAPTGLYLSLDSIKQILEDNINKVVMVDEAYIDFGGESSVSLIKDYPNLLVIQTLSKSRSLAGMRIGFALGQKELIEGLNRIKNSFNSYTIDRISSLAAIEAIKDEEYFKECTLKVIKTRNWTINELGKIGFKIIPSKANFIFITHDTYEAEDIFIKLRDENVLVRYFNKDRISNYLRVSIGSKEEMEIFIDKIKKIINKL</sequence>
<evidence type="ECO:0000255" key="1">
    <source>
        <dbReference type="HAMAP-Rule" id="MF_01023"/>
    </source>
</evidence>